<proteinExistence type="inferred from homology"/>
<comment type="function">
    <text evidence="1">Catalyzes the transfer of the L-Ara4N moiety of the glycolipid undecaprenyl phosphate-alpha-L-Ara4N to lipid A. The modified arabinose is attached to lipid A and is required for resistance to polymyxin and cationic antimicrobial peptides.</text>
</comment>
<comment type="catalytic activity">
    <reaction evidence="1">
        <text>4-amino-4-deoxy-alpha-L-arabinopyranosyl di-trans,octa-cis-undecaprenyl phosphate + lipid IVA = lipid IIA + di-trans,octa-cis-undecaprenyl phosphate.</text>
        <dbReference type="EC" id="2.4.2.43"/>
    </reaction>
</comment>
<comment type="pathway">
    <text evidence="1">Lipopolysaccharide metabolism; 4-amino-4-deoxy-beta-L-arabinose-lipid A biosynthesis.</text>
</comment>
<comment type="subcellular location">
    <subcellularLocation>
        <location evidence="1">Cell inner membrane</location>
        <topology evidence="1">Multi-pass membrane protein</topology>
    </subcellularLocation>
</comment>
<comment type="similarity">
    <text evidence="1">Belongs to the glycosyltransferase 83 family.</text>
</comment>
<reference key="1">
    <citation type="journal article" date="2006" name="Proc. Natl. Acad. Sci. U.S.A.">
        <title>Identification of genes subject to positive selection in uropathogenic strains of Escherichia coli: a comparative genomics approach.</title>
        <authorList>
            <person name="Chen S.L."/>
            <person name="Hung C.-S."/>
            <person name="Xu J."/>
            <person name="Reigstad C.S."/>
            <person name="Magrini V."/>
            <person name="Sabo A."/>
            <person name="Blasiar D."/>
            <person name="Bieri T."/>
            <person name="Meyer R.R."/>
            <person name="Ozersky P."/>
            <person name="Armstrong J.R."/>
            <person name="Fulton R.S."/>
            <person name="Latreille J.P."/>
            <person name="Spieth J."/>
            <person name="Hooton T.M."/>
            <person name="Mardis E.R."/>
            <person name="Hultgren S.J."/>
            <person name="Gordon J.I."/>
        </authorList>
    </citation>
    <scope>NUCLEOTIDE SEQUENCE [LARGE SCALE GENOMIC DNA]</scope>
    <source>
        <strain>UTI89 / UPEC</strain>
    </source>
</reference>
<accession>Q1R9F8</accession>
<name>ARNT_ECOUT</name>
<protein>
    <recommendedName>
        <fullName evidence="1">Undecaprenyl phosphate-alpha-4-amino-4-deoxy-L-arabinose arabinosyl transferase</fullName>
        <ecNumber evidence="1">2.4.2.43</ecNumber>
    </recommendedName>
    <alternativeName>
        <fullName evidence="1">4-amino-4-deoxy-L-arabinose lipid A transferase</fullName>
    </alternativeName>
    <alternativeName>
        <fullName evidence="1">Lipid IV(A) 4-amino-4-deoxy-L-arabinosyltransferase</fullName>
    </alternativeName>
    <alternativeName>
        <fullName evidence="1">Undecaprenyl phosphate-alpha-L-Ara4N transferase</fullName>
    </alternativeName>
</protein>
<keyword id="KW-0997">Cell inner membrane</keyword>
<keyword id="KW-1003">Cell membrane</keyword>
<keyword id="KW-0328">Glycosyltransferase</keyword>
<keyword id="KW-0441">Lipid A biosynthesis</keyword>
<keyword id="KW-0444">Lipid biosynthesis</keyword>
<keyword id="KW-0443">Lipid metabolism</keyword>
<keyword id="KW-0448">Lipopolysaccharide biosynthesis</keyword>
<keyword id="KW-0472">Membrane</keyword>
<keyword id="KW-0808">Transferase</keyword>
<keyword id="KW-0812">Transmembrane</keyword>
<keyword id="KW-1133">Transmembrane helix</keyword>
<evidence type="ECO:0000255" key="1">
    <source>
        <dbReference type="HAMAP-Rule" id="MF_01165"/>
    </source>
</evidence>
<gene>
    <name evidence="1" type="primary">arnT</name>
    <name type="ordered locus">UTI89_C2539</name>
</gene>
<feature type="chain" id="PRO_0000380010" description="Undecaprenyl phosphate-alpha-4-amino-4-deoxy-L-arabinose arabinosyl transferase">
    <location>
        <begin position="1"/>
        <end position="550"/>
    </location>
</feature>
<feature type="transmembrane region" description="Helical" evidence="1">
    <location>
        <begin position="7"/>
        <end position="27"/>
    </location>
</feature>
<feature type="transmembrane region" description="Helical" evidence="1">
    <location>
        <begin position="81"/>
        <end position="101"/>
    </location>
</feature>
<feature type="transmembrane region" description="Helical" evidence="1">
    <location>
        <begin position="111"/>
        <end position="133"/>
    </location>
</feature>
<feature type="transmembrane region" description="Helical" evidence="1">
    <location>
        <begin position="137"/>
        <end position="154"/>
    </location>
</feature>
<feature type="transmembrane region" description="Helical" evidence="1">
    <location>
        <begin position="165"/>
        <end position="185"/>
    </location>
</feature>
<feature type="transmembrane region" description="Helical" evidence="1">
    <location>
        <begin position="204"/>
        <end position="224"/>
    </location>
</feature>
<feature type="transmembrane region" description="Helical" evidence="1">
    <location>
        <begin position="263"/>
        <end position="283"/>
    </location>
</feature>
<feature type="transmembrane region" description="Helical" evidence="1">
    <location>
        <begin position="288"/>
        <end position="308"/>
    </location>
</feature>
<feature type="transmembrane region" description="Helical" evidence="1">
    <location>
        <begin position="315"/>
        <end position="335"/>
    </location>
</feature>
<feature type="transmembrane region" description="Helical" evidence="1">
    <location>
        <begin position="346"/>
        <end position="366"/>
    </location>
</feature>
<feature type="transmembrane region" description="Helical" evidence="1">
    <location>
        <begin position="382"/>
        <end position="402"/>
    </location>
</feature>
<feature type="transmembrane region" description="Helical" evidence="1">
    <location>
        <begin position="406"/>
        <end position="426"/>
    </location>
</feature>
<organism>
    <name type="scientific">Escherichia coli (strain UTI89 / UPEC)</name>
    <dbReference type="NCBI Taxonomy" id="364106"/>
    <lineage>
        <taxon>Bacteria</taxon>
        <taxon>Pseudomonadati</taxon>
        <taxon>Pseudomonadota</taxon>
        <taxon>Gammaproteobacteria</taxon>
        <taxon>Enterobacterales</taxon>
        <taxon>Enterobacteriaceae</taxon>
        <taxon>Escherichia</taxon>
    </lineage>
</organism>
<sequence>MKSVRYLIGLFAFIACYYLLPISTRLLWQPDETRYAEISREMLASGDWIVPHLLGLRYFEKPIAGYWINSIGQWLFGANNFGVRAGVIFATLLTAALVTWFTLRLWRNKRLALLATVIYLSLFIVYAIGTYAVLDPFIAFWLVAGMCSFWLAMQAQTWKGKSAGFLLLGITCGMGVMTKGFLALAVPVLSVLPWVATQKRWKDLFIYGWLAVISCVLTVLPWGLAIAQREPDFWHYFFWVEHIQRFALDDAQHRAPFWYYLPVIIAGSLPWLGLLPGALYAGWKNRKHSATVYLLSWTIMPLLFFSVAKGKLPTYILSCFAPLAMLMAHYALLAAKNNPLALRINGWINIAFGVTGIIATFVVSPWGPMNTPVWQTFESYKVFCAWSIFSLWAFFGWYTLTNVEKTWPFAALCPLGLALLVGFSIPDRVMEGKHPQFFVEMTQESLQPSRYILTDSVGVAAGLAWSLQRDDIIMYRQTGELKYGLNYPDAKGRFVSGDEFANWLNQHRQEGIITLVLSVDRDEDINSLAIPPADVIDRQERLVLIQYRPK</sequence>
<dbReference type="EC" id="2.4.2.43" evidence="1"/>
<dbReference type="EMBL" id="CP000243">
    <property type="protein sequence ID" value="ABE08006.1"/>
    <property type="molecule type" value="Genomic_DNA"/>
</dbReference>
<dbReference type="RefSeq" id="WP_000844070.1">
    <property type="nucleotide sequence ID" value="NZ_CP064825.1"/>
</dbReference>
<dbReference type="SMR" id="Q1R9F8"/>
<dbReference type="CAZy" id="GT83">
    <property type="family name" value="Glycosyltransferase Family 83"/>
</dbReference>
<dbReference type="KEGG" id="eci:UTI89_C2539"/>
<dbReference type="HOGENOM" id="CLU_019200_2_1_6"/>
<dbReference type="UniPathway" id="UPA00037"/>
<dbReference type="Proteomes" id="UP000001952">
    <property type="component" value="Chromosome"/>
</dbReference>
<dbReference type="GO" id="GO:0005886">
    <property type="term" value="C:plasma membrane"/>
    <property type="evidence" value="ECO:0007669"/>
    <property type="project" value="UniProtKB-SubCell"/>
</dbReference>
<dbReference type="GO" id="GO:0103015">
    <property type="term" value="F:4-amino-4-deoxy-L-arabinose transferase activity"/>
    <property type="evidence" value="ECO:0007669"/>
    <property type="project" value="UniProtKB-EC"/>
</dbReference>
<dbReference type="GO" id="GO:0000030">
    <property type="term" value="F:mannosyltransferase activity"/>
    <property type="evidence" value="ECO:0007669"/>
    <property type="project" value="InterPro"/>
</dbReference>
<dbReference type="GO" id="GO:0009245">
    <property type="term" value="P:lipid A biosynthetic process"/>
    <property type="evidence" value="ECO:0007669"/>
    <property type="project" value="UniProtKB-UniRule"/>
</dbReference>
<dbReference type="GO" id="GO:0009103">
    <property type="term" value="P:lipopolysaccharide biosynthetic process"/>
    <property type="evidence" value="ECO:0007669"/>
    <property type="project" value="UniProtKB-KW"/>
</dbReference>
<dbReference type="GO" id="GO:0006493">
    <property type="term" value="P:protein O-linked glycosylation"/>
    <property type="evidence" value="ECO:0007669"/>
    <property type="project" value="InterPro"/>
</dbReference>
<dbReference type="GO" id="GO:0010041">
    <property type="term" value="P:response to iron(III) ion"/>
    <property type="evidence" value="ECO:0007669"/>
    <property type="project" value="TreeGrafter"/>
</dbReference>
<dbReference type="HAMAP" id="MF_01165">
    <property type="entry name" value="ArnT_transfer"/>
    <property type="match status" value="1"/>
</dbReference>
<dbReference type="InterPro" id="IPR022839">
    <property type="entry name" value="ArnT_tfrase"/>
</dbReference>
<dbReference type="InterPro" id="IPR003342">
    <property type="entry name" value="Glyco_trans_39/83"/>
</dbReference>
<dbReference type="InterPro" id="IPR050297">
    <property type="entry name" value="LipidA_mod_glycosyltrf_83"/>
</dbReference>
<dbReference type="NCBIfam" id="NF009784">
    <property type="entry name" value="PRK13279.1"/>
    <property type="match status" value="1"/>
</dbReference>
<dbReference type="PANTHER" id="PTHR33908">
    <property type="entry name" value="MANNOSYLTRANSFERASE YKCB-RELATED"/>
    <property type="match status" value="1"/>
</dbReference>
<dbReference type="PANTHER" id="PTHR33908:SF3">
    <property type="entry name" value="UNDECAPRENYL PHOSPHATE-ALPHA-4-AMINO-4-DEOXY-L-ARABINOSE ARABINOSYL TRANSFERASE"/>
    <property type="match status" value="1"/>
</dbReference>
<dbReference type="Pfam" id="PF02366">
    <property type="entry name" value="PMT"/>
    <property type="match status" value="1"/>
</dbReference>